<feature type="chain" id="PRO_1000093749" description="Translation initiation factor IF-2">
    <location>
        <begin position="1"/>
        <end position="899"/>
    </location>
</feature>
<feature type="domain" description="tr-type G">
    <location>
        <begin position="399"/>
        <end position="568"/>
    </location>
</feature>
<feature type="region of interest" description="Disordered" evidence="3">
    <location>
        <begin position="116"/>
        <end position="135"/>
    </location>
</feature>
<feature type="region of interest" description="Disordered" evidence="3">
    <location>
        <begin position="170"/>
        <end position="189"/>
    </location>
</feature>
<feature type="region of interest" description="Disordered" evidence="3">
    <location>
        <begin position="262"/>
        <end position="306"/>
    </location>
</feature>
<feature type="region of interest" description="G1" evidence="1">
    <location>
        <begin position="408"/>
        <end position="415"/>
    </location>
</feature>
<feature type="region of interest" description="G2" evidence="1">
    <location>
        <begin position="433"/>
        <end position="437"/>
    </location>
</feature>
<feature type="region of interest" description="G3" evidence="1">
    <location>
        <begin position="454"/>
        <end position="457"/>
    </location>
</feature>
<feature type="region of interest" description="G4" evidence="1">
    <location>
        <begin position="508"/>
        <end position="511"/>
    </location>
</feature>
<feature type="region of interest" description="G5" evidence="1">
    <location>
        <begin position="544"/>
        <end position="546"/>
    </location>
</feature>
<feature type="binding site" evidence="2">
    <location>
        <begin position="408"/>
        <end position="415"/>
    </location>
    <ligand>
        <name>GTP</name>
        <dbReference type="ChEBI" id="CHEBI:37565"/>
    </ligand>
</feature>
<feature type="binding site" evidence="2">
    <location>
        <begin position="454"/>
        <end position="458"/>
    </location>
    <ligand>
        <name>GTP</name>
        <dbReference type="ChEBI" id="CHEBI:37565"/>
    </ligand>
</feature>
<feature type="binding site" evidence="2">
    <location>
        <begin position="508"/>
        <end position="511"/>
    </location>
    <ligand>
        <name>GTP</name>
        <dbReference type="ChEBI" id="CHEBI:37565"/>
    </ligand>
</feature>
<proteinExistence type="inferred from homology"/>
<sequence>MTDKSIKELALSVGRPVEKLLEQAREAGLPQRTADDIITTEQQDTLVNYLKKVHGQESGNTGKIALKRKTTSTAKVASTSGKAKTINVEVRKKQVFAKPNPEQIAAEAKARAEAEAKARAEQQAREAAEQKARLQTEQKAKATLDAMRAAHQQDSAAQSAPKAAVVVKKRGGGTVKPAPKPAETLEQKKAREAQTAQLKATEEAARRKAAEEAQQRTLEQMRKMASKYSNDDATATIRVIDDSPLASGLVGQAYEDSFNQEDREIKRGGATTNPRAGKKGGRRGQEEQSFVNHNKRGLKSSQANKHGFEKPVKKQVYDVEIGSSIVVADLAQKMAIKVREVIKTLMKMGELVNQNQTIDQDTAALVVEEMGHNPVLVSDTQAEDNLLEAAEEARGEQTTRPPVVTIMGHVDHGKTSLLDRIRRSKVAAGEAGGITQHIGAYHVETDKGIITFLDTPGHAAFTSMRARGAKATDIVVLVVAADDGVMPQTAEAIDHARAAGTPIIVAINKMDKESADPDRVLNELTTKEIVPEEWGGDVPVAKVSAHTGQGIDELLDLILIQSELMELKASAEGAAQGVVIEARVDKGRGAVTSILVQNGTLNIGDLVLAGSSYGRVRAMSDENGKPIKSAGPSIPVEILGLPEAPMAGDEVLVVNDEKKAREVADARADREREKRIERQSAMRLENIMASMGKKDVPTVNVVLRTDVRGTLEALNAALHELSTDEVKVRVISSGVGAITESDVILAESSEAVLLGFNVRADTAARQKSDQDGIDIRYYSIIYELIDDVKDAMSGKLAPEHRETILGVAQVREVFRSSKFGAAAGCMVMEGVIHRNKPIRVLRDDVVIFQGELESLRRYKDVVDEVRAGMECGLAVKGYNDIKPLDKIEVYDVQMVKRSL</sequence>
<name>IF2_ACIBC</name>
<protein>
    <recommendedName>
        <fullName evidence="2">Translation initiation factor IF-2</fullName>
    </recommendedName>
</protein>
<evidence type="ECO:0000250" key="1"/>
<evidence type="ECO:0000255" key="2">
    <source>
        <dbReference type="HAMAP-Rule" id="MF_00100"/>
    </source>
</evidence>
<evidence type="ECO:0000256" key="3">
    <source>
        <dbReference type="SAM" id="MobiDB-lite"/>
    </source>
</evidence>
<dbReference type="EMBL" id="CP000863">
    <property type="protein sequence ID" value="ACC55662.1"/>
    <property type="molecule type" value="Genomic_DNA"/>
</dbReference>
<dbReference type="RefSeq" id="WP_000130326.1">
    <property type="nucleotide sequence ID" value="NZ_CP031380.1"/>
</dbReference>
<dbReference type="SMR" id="B2I2M7"/>
<dbReference type="GeneID" id="92892331"/>
<dbReference type="KEGG" id="abc:ACICU_00350"/>
<dbReference type="HOGENOM" id="CLU_006301_6_2_6"/>
<dbReference type="Proteomes" id="UP000008839">
    <property type="component" value="Chromosome"/>
</dbReference>
<dbReference type="GO" id="GO:0005829">
    <property type="term" value="C:cytosol"/>
    <property type="evidence" value="ECO:0007669"/>
    <property type="project" value="TreeGrafter"/>
</dbReference>
<dbReference type="GO" id="GO:0005525">
    <property type="term" value="F:GTP binding"/>
    <property type="evidence" value="ECO:0007669"/>
    <property type="project" value="UniProtKB-KW"/>
</dbReference>
<dbReference type="GO" id="GO:0003924">
    <property type="term" value="F:GTPase activity"/>
    <property type="evidence" value="ECO:0007669"/>
    <property type="project" value="UniProtKB-UniRule"/>
</dbReference>
<dbReference type="GO" id="GO:0003743">
    <property type="term" value="F:translation initiation factor activity"/>
    <property type="evidence" value="ECO:0007669"/>
    <property type="project" value="UniProtKB-UniRule"/>
</dbReference>
<dbReference type="CDD" id="cd01887">
    <property type="entry name" value="IF2_eIF5B"/>
    <property type="match status" value="1"/>
</dbReference>
<dbReference type="CDD" id="cd03702">
    <property type="entry name" value="IF2_mtIF2_II"/>
    <property type="match status" value="1"/>
</dbReference>
<dbReference type="CDD" id="cd03692">
    <property type="entry name" value="mtIF2_IVc"/>
    <property type="match status" value="1"/>
</dbReference>
<dbReference type="FunFam" id="2.40.30.10:FF:000007">
    <property type="entry name" value="Translation initiation factor IF-2"/>
    <property type="match status" value="1"/>
</dbReference>
<dbReference type="FunFam" id="2.40.30.10:FF:000008">
    <property type="entry name" value="Translation initiation factor IF-2"/>
    <property type="match status" value="1"/>
</dbReference>
<dbReference type="FunFam" id="3.40.50.10050:FF:000001">
    <property type="entry name" value="Translation initiation factor IF-2"/>
    <property type="match status" value="1"/>
</dbReference>
<dbReference type="FunFam" id="3.40.50.300:FF:000019">
    <property type="entry name" value="Translation initiation factor IF-2"/>
    <property type="match status" value="1"/>
</dbReference>
<dbReference type="Gene3D" id="3.40.50.300">
    <property type="entry name" value="P-loop containing nucleotide triphosphate hydrolases"/>
    <property type="match status" value="1"/>
</dbReference>
<dbReference type="Gene3D" id="3.30.56.50">
    <property type="entry name" value="Putative DNA-binding domain, N-terminal subdomain of bacterial translation initiation factor IF2"/>
    <property type="match status" value="1"/>
</dbReference>
<dbReference type="Gene3D" id="2.40.30.10">
    <property type="entry name" value="Translation factors"/>
    <property type="match status" value="2"/>
</dbReference>
<dbReference type="Gene3D" id="3.40.50.10050">
    <property type="entry name" value="Translation initiation factor IF- 2, domain 3"/>
    <property type="match status" value="1"/>
</dbReference>
<dbReference type="HAMAP" id="MF_00100_B">
    <property type="entry name" value="IF_2_B"/>
    <property type="match status" value="1"/>
</dbReference>
<dbReference type="InterPro" id="IPR009061">
    <property type="entry name" value="DNA-bd_dom_put_sf"/>
</dbReference>
<dbReference type="InterPro" id="IPR053905">
    <property type="entry name" value="EF-G-like_DII"/>
</dbReference>
<dbReference type="InterPro" id="IPR013575">
    <property type="entry name" value="IF2_assoc_dom_bac"/>
</dbReference>
<dbReference type="InterPro" id="IPR044145">
    <property type="entry name" value="IF2_II"/>
</dbReference>
<dbReference type="InterPro" id="IPR006847">
    <property type="entry name" value="IF2_N"/>
</dbReference>
<dbReference type="InterPro" id="IPR027417">
    <property type="entry name" value="P-loop_NTPase"/>
</dbReference>
<dbReference type="InterPro" id="IPR005225">
    <property type="entry name" value="Small_GTP-bd"/>
</dbReference>
<dbReference type="InterPro" id="IPR000795">
    <property type="entry name" value="T_Tr_GTP-bd_dom"/>
</dbReference>
<dbReference type="InterPro" id="IPR000178">
    <property type="entry name" value="TF_IF2_bacterial-like"/>
</dbReference>
<dbReference type="InterPro" id="IPR015760">
    <property type="entry name" value="TIF_IF2"/>
</dbReference>
<dbReference type="InterPro" id="IPR023115">
    <property type="entry name" value="TIF_IF2_dom3"/>
</dbReference>
<dbReference type="InterPro" id="IPR036925">
    <property type="entry name" value="TIF_IF2_dom3_sf"/>
</dbReference>
<dbReference type="InterPro" id="IPR009000">
    <property type="entry name" value="Transl_B-barrel_sf"/>
</dbReference>
<dbReference type="NCBIfam" id="TIGR00487">
    <property type="entry name" value="IF-2"/>
    <property type="match status" value="1"/>
</dbReference>
<dbReference type="NCBIfam" id="TIGR00231">
    <property type="entry name" value="small_GTP"/>
    <property type="match status" value="1"/>
</dbReference>
<dbReference type="PANTHER" id="PTHR43381:SF5">
    <property type="entry name" value="TR-TYPE G DOMAIN-CONTAINING PROTEIN"/>
    <property type="match status" value="1"/>
</dbReference>
<dbReference type="PANTHER" id="PTHR43381">
    <property type="entry name" value="TRANSLATION INITIATION FACTOR IF-2-RELATED"/>
    <property type="match status" value="1"/>
</dbReference>
<dbReference type="Pfam" id="PF22042">
    <property type="entry name" value="EF-G_D2"/>
    <property type="match status" value="1"/>
</dbReference>
<dbReference type="Pfam" id="PF00009">
    <property type="entry name" value="GTP_EFTU"/>
    <property type="match status" value="1"/>
</dbReference>
<dbReference type="Pfam" id="PF11987">
    <property type="entry name" value="IF-2"/>
    <property type="match status" value="1"/>
</dbReference>
<dbReference type="Pfam" id="PF08364">
    <property type="entry name" value="IF2_assoc"/>
    <property type="match status" value="1"/>
</dbReference>
<dbReference type="Pfam" id="PF04760">
    <property type="entry name" value="IF2_N"/>
    <property type="match status" value="1"/>
</dbReference>
<dbReference type="SUPFAM" id="SSF52156">
    <property type="entry name" value="Initiation factor IF2/eIF5b, domain 3"/>
    <property type="match status" value="1"/>
</dbReference>
<dbReference type="SUPFAM" id="SSF52540">
    <property type="entry name" value="P-loop containing nucleoside triphosphate hydrolases"/>
    <property type="match status" value="1"/>
</dbReference>
<dbReference type="SUPFAM" id="SSF46955">
    <property type="entry name" value="Putative DNA-binding domain"/>
    <property type="match status" value="1"/>
</dbReference>
<dbReference type="SUPFAM" id="SSF50447">
    <property type="entry name" value="Translation proteins"/>
    <property type="match status" value="2"/>
</dbReference>
<dbReference type="PROSITE" id="PS51722">
    <property type="entry name" value="G_TR_2"/>
    <property type="match status" value="1"/>
</dbReference>
<dbReference type="PROSITE" id="PS01176">
    <property type="entry name" value="IF2"/>
    <property type="match status" value="1"/>
</dbReference>
<reference key="1">
    <citation type="journal article" date="2008" name="Antimicrob. Agents Chemother.">
        <title>Whole-genome pyrosequencing of an epidemic multidrug-resistant Acinetobacter baumannii strain belonging to the European clone II group.</title>
        <authorList>
            <person name="Iacono M."/>
            <person name="Villa L."/>
            <person name="Fortini D."/>
            <person name="Bordoni R."/>
            <person name="Imperi F."/>
            <person name="Bonnal R.J."/>
            <person name="Sicheritz-Ponten T."/>
            <person name="De Bellis G."/>
            <person name="Visca P."/>
            <person name="Cassone A."/>
            <person name="Carattoli A."/>
        </authorList>
    </citation>
    <scope>NUCLEOTIDE SEQUENCE [LARGE SCALE GENOMIC DNA]</scope>
    <source>
        <strain>ACICU</strain>
    </source>
</reference>
<comment type="function">
    <text evidence="2">One of the essential components for the initiation of protein synthesis. Protects formylmethionyl-tRNA from spontaneous hydrolysis and promotes its binding to the 30S ribosomal subunits. Also involved in the hydrolysis of GTP during the formation of the 70S ribosomal complex.</text>
</comment>
<comment type="subcellular location">
    <subcellularLocation>
        <location evidence="2">Cytoplasm</location>
    </subcellularLocation>
</comment>
<comment type="similarity">
    <text evidence="2">Belongs to the TRAFAC class translation factor GTPase superfamily. Classic translation factor GTPase family. IF-2 subfamily.</text>
</comment>
<organism>
    <name type="scientific">Acinetobacter baumannii (strain ACICU)</name>
    <dbReference type="NCBI Taxonomy" id="405416"/>
    <lineage>
        <taxon>Bacteria</taxon>
        <taxon>Pseudomonadati</taxon>
        <taxon>Pseudomonadota</taxon>
        <taxon>Gammaproteobacteria</taxon>
        <taxon>Moraxellales</taxon>
        <taxon>Moraxellaceae</taxon>
        <taxon>Acinetobacter</taxon>
        <taxon>Acinetobacter calcoaceticus/baumannii complex</taxon>
    </lineage>
</organism>
<accession>B2I2M7</accession>
<gene>
    <name evidence="2" type="primary">infB</name>
    <name type="ordered locus">ACICU_00350</name>
</gene>
<keyword id="KW-0963">Cytoplasm</keyword>
<keyword id="KW-0342">GTP-binding</keyword>
<keyword id="KW-0396">Initiation factor</keyword>
<keyword id="KW-0547">Nucleotide-binding</keyword>
<keyword id="KW-0648">Protein biosynthesis</keyword>